<organism>
    <name type="scientific">Mycobacterium tuberculosis (strain ATCC 25618 / H37Rv)</name>
    <dbReference type="NCBI Taxonomy" id="83332"/>
    <lineage>
        <taxon>Bacteria</taxon>
        <taxon>Bacillati</taxon>
        <taxon>Actinomycetota</taxon>
        <taxon>Actinomycetes</taxon>
        <taxon>Mycobacteriales</taxon>
        <taxon>Mycobacteriaceae</taxon>
        <taxon>Mycobacterium</taxon>
        <taxon>Mycobacterium tuberculosis complex</taxon>
    </lineage>
</organism>
<reference key="1">
    <citation type="journal article" date="1998" name="Nature">
        <title>Deciphering the biology of Mycobacterium tuberculosis from the complete genome sequence.</title>
        <authorList>
            <person name="Cole S.T."/>
            <person name="Brosch R."/>
            <person name="Parkhill J."/>
            <person name="Garnier T."/>
            <person name="Churcher C.M."/>
            <person name="Harris D.E."/>
            <person name="Gordon S.V."/>
            <person name="Eiglmeier K."/>
            <person name="Gas S."/>
            <person name="Barry C.E. III"/>
            <person name="Tekaia F."/>
            <person name="Badcock K."/>
            <person name="Basham D."/>
            <person name="Brown D."/>
            <person name="Chillingworth T."/>
            <person name="Connor R."/>
            <person name="Davies R.M."/>
            <person name="Devlin K."/>
            <person name="Feltwell T."/>
            <person name="Gentles S."/>
            <person name="Hamlin N."/>
            <person name="Holroyd S."/>
            <person name="Hornsby T."/>
            <person name="Jagels K."/>
            <person name="Krogh A."/>
            <person name="McLean J."/>
            <person name="Moule S."/>
            <person name="Murphy L.D."/>
            <person name="Oliver S."/>
            <person name="Osborne J."/>
            <person name="Quail M.A."/>
            <person name="Rajandream M.A."/>
            <person name="Rogers J."/>
            <person name="Rutter S."/>
            <person name="Seeger K."/>
            <person name="Skelton S."/>
            <person name="Squares S."/>
            <person name="Squares R."/>
            <person name="Sulston J.E."/>
            <person name="Taylor K."/>
            <person name="Whitehead S."/>
            <person name="Barrell B.G."/>
        </authorList>
    </citation>
    <scope>NUCLEOTIDE SEQUENCE [LARGE SCALE GENOMIC DNA]</scope>
    <source>
        <strain>ATCC 25618 / H37Rv</strain>
    </source>
</reference>
<reference key="2">
    <citation type="journal article" date="2011" name="Mol. Cell. Proteomics">
        <title>Proteogenomic analysis of Mycobacterium tuberculosis by high resolution mass spectrometry.</title>
        <authorList>
            <person name="Kelkar D.S."/>
            <person name="Kumar D."/>
            <person name="Kumar P."/>
            <person name="Balakrishnan L."/>
            <person name="Muthusamy B."/>
            <person name="Yadav A.K."/>
            <person name="Shrivastava P."/>
            <person name="Marimuthu A."/>
            <person name="Anand S."/>
            <person name="Sundaram H."/>
            <person name="Kingsbury R."/>
            <person name="Harsha H.C."/>
            <person name="Nair B."/>
            <person name="Prasad T.S."/>
            <person name="Chauhan D.S."/>
            <person name="Katoch K."/>
            <person name="Katoch V.M."/>
            <person name="Kumar P."/>
            <person name="Chaerkady R."/>
            <person name="Ramachandran S."/>
            <person name="Dash D."/>
            <person name="Pandey A."/>
        </authorList>
    </citation>
    <scope>IDENTIFICATION BY MASS SPECTROMETRY [LARGE SCALE ANALYSIS]</scope>
    <source>
        <strain>ATCC 25618 / H37Rv</strain>
    </source>
</reference>
<name>DAGK_MYCTU</name>
<feature type="chain" id="PRO_0000386484" description="Diacylglycerol kinase">
    <location>
        <begin position="1"/>
        <end position="309"/>
    </location>
</feature>
<feature type="domain" description="DAGKc" evidence="3">
    <location>
        <begin position="9"/>
        <end position="140"/>
    </location>
</feature>
<feature type="active site" description="Proton acceptor" evidence="2">
    <location>
        <position position="285"/>
    </location>
</feature>
<feature type="binding site" evidence="3">
    <location>
        <begin position="19"/>
        <end position="23"/>
    </location>
    <ligand>
        <name>ATP</name>
        <dbReference type="ChEBI" id="CHEBI:30616"/>
    </ligand>
</feature>
<feature type="binding site" evidence="3">
    <location>
        <begin position="76"/>
        <end position="82"/>
    </location>
    <ligand>
        <name>ATP</name>
        <dbReference type="ChEBI" id="CHEBI:30616"/>
    </ligand>
</feature>
<feature type="binding site" evidence="3">
    <location>
        <position position="101"/>
    </location>
    <ligand>
        <name>ATP</name>
        <dbReference type="ChEBI" id="CHEBI:30616"/>
    </ligand>
</feature>
<feature type="binding site" evidence="2">
    <location>
        <position position="226"/>
    </location>
    <ligand>
        <name>Mg(2+)</name>
        <dbReference type="ChEBI" id="CHEBI:18420"/>
    </ligand>
</feature>
<feature type="binding site" evidence="2">
    <location>
        <position position="229"/>
    </location>
    <ligand>
        <name>Mg(2+)</name>
        <dbReference type="ChEBI" id="CHEBI:18420"/>
    </ligand>
</feature>
<feature type="binding site" evidence="2">
    <location>
        <position position="231"/>
    </location>
    <ligand>
        <name>Mg(2+)</name>
        <dbReference type="ChEBI" id="CHEBI:18420"/>
    </ligand>
</feature>
<keyword id="KW-0067">ATP-binding</keyword>
<keyword id="KW-0134">Cell wall</keyword>
<keyword id="KW-0418">Kinase</keyword>
<keyword id="KW-0444">Lipid biosynthesis</keyword>
<keyword id="KW-0443">Lipid metabolism</keyword>
<keyword id="KW-0460">Magnesium</keyword>
<keyword id="KW-0479">Metal-binding</keyword>
<keyword id="KW-0547">Nucleotide-binding</keyword>
<keyword id="KW-0594">Phospholipid biosynthesis</keyword>
<keyword id="KW-1208">Phospholipid metabolism</keyword>
<keyword id="KW-1185">Reference proteome</keyword>
<keyword id="KW-0964">Secreted</keyword>
<keyword id="KW-0808">Transferase</keyword>
<proteinExistence type="evidence at protein level"/>
<comment type="function">
    <text evidence="1">Catalyzes the phosphorylation of diacylglycerol (DAG) into phosphatidic acid. Is involved in the biosynthesis of phosphatidylinositol mannosides (PIMs), probably via a role in the biosynthesis of phosphatidylinositol (PI), a PIM precursor, which is derived from phosphatidic acid.</text>
</comment>
<comment type="catalytic activity">
    <reaction evidence="1">
        <text>a 1,2-diacyl-sn-glycerol + ATP = a 1,2-diacyl-sn-glycero-3-phosphate + ADP + H(+)</text>
        <dbReference type="Rhea" id="RHEA:10272"/>
        <dbReference type="ChEBI" id="CHEBI:15378"/>
        <dbReference type="ChEBI" id="CHEBI:17815"/>
        <dbReference type="ChEBI" id="CHEBI:30616"/>
        <dbReference type="ChEBI" id="CHEBI:58608"/>
        <dbReference type="ChEBI" id="CHEBI:456216"/>
        <dbReference type="EC" id="2.7.1.107"/>
    </reaction>
    <physiologicalReaction direction="left-to-right" evidence="1">
        <dbReference type="Rhea" id="RHEA:10273"/>
    </physiologicalReaction>
</comment>
<comment type="cofactor">
    <cofactor evidence="2">
        <name>Mg(2+)</name>
        <dbReference type="ChEBI" id="CHEBI:18420"/>
    </cofactor>
    <text evidence="2">Binds 1 Mg(2+) ion per subunit. This ion appears to have a structural role and is required for catalytic activity.</text>
</comment>
<comment type="subcellular location">
    <subcellularLocation>
        <location evidence="1">Secreted</location>
        <location evidence="1">Cell wall</location>
    </subcellularLocation>
</comment>
<comment type="similarity">
    <text evidence="4">Belongs to the diacylglycerol/lipid kinase family.</text>
</comment>
<gene>
    <name type="primary">dagK</name>
    <name type="ordered locus">Rv2252</name>
</gene>
<accession>P9WP29</accession>
<accession>L0TAM7</accession>
<accession>O53526</accession>
<sequence>MSAGQLRRHEIGKVTALTNPLSGHGAAVKAAHGAIARLKHRGVDVVEIVGGDAHDARHLLAAAVAKGTDAVMVTGGDGVVSNALQVLAGTDIPLGIIPAGTGNDHAREFGLPTKNPKAAADIVVDGWTETIDLGRIQDDNGIEKWFGTVAATGFDSLVNDRANRMRWPHGRMRYYIAMLAELSRLRPLPFRLVLDGTEEIVADLTLADFGNTRSYGGGLLICPNADHSDGLLDITMAQSDSRTKLLRLFPTIFKGAHVELDEVSTTRAKTVHVECPGINVYADGDFACPLPAEISAVPAALQVLRPRHG</sequence>
<protein>
    <recommendedName>
        <fullName evidence="1">Diacylglycerol kinase</fullName>
        <shortName evidence="1">DAG kinase</shortName>
        <shortName evidence="1">DAGK</shortName>
        <ecNumber evidence="1">2.7.1.107</ecNumber>
    </recommendedName>
</protein>
<evidence type="ECO:0000250" key="1">
    <source>
        <dbReference type="UniProtKB" id="P9WP28"/>
    </source>
</evidence>
<evidence type="ECO:0000250" key="2">
    <source>
        <dbReference type="UniProtKB" id="Q6GFF9"/>
    </source>
</evidence>
<evidence type="ECO:0000255" key="3">
    <source>
        <dbReference type="PROSITE-ProRule" id="PRU00783"/>
    </source>
</evidence>
<evidence type="ECO:0000305" key="4"/>
<dbReference type="EC" id="2.7.1.107" evidence="1"/>
<dbReference type="EMBL" id="AL123456">
    <property type="protein sequence ID" value="CCP45033.1"/>
    <property type="molecule type" value="Genomic_DNA"/>
</dbReference>
<dbReference type="PIR" id="H70861">
    <property type="entry name" value="H70861"/>
</dbReference>
<dbReference type="RefSeq" id="NP_216768.1">
    <property type="nucleotide sequence ID" value="NC_000962.3"/>
</dbReference>
<dbReference type="RefSeq" id="WP_003411603.1">
    <property type="nucleotide sequence ID" value="NZ_NVQJ01000008.1"/>
</dbReference>
<dbReference type="SMR" id="P9WP29"/>
<dbReference type="FunCoup" id="P9WP29">
    <property type="interactions" value="78"/>
</dbReference>
<dbReference type="STRING" id="83332.Rv2252"/>
<dbReference type="SwissLipids" id="SLP:000001234"/>
<dbReference type="PaxDb" id="83332-Rv2252"/>
<dbReference type="DNASU" id="888429"/>
<dbReference type="GeneID" id="888429"/>
<dbReference type="KEGG" id="mtu:Rv2252"/>
<dbReference type="KEGG" id="mtv:RVBD_2252"/>
<dbReference type="TubercuList" id="Rv2252"/>
<dbReference type="eggNOG" id="COG1597">
    <property type="taxonomic scope" value="Bacteria"/>
</dbReference>
<dbReference type="InParanoid" id="P9WP29"/>
<dbReference type="OrthoDB" id="142078at2"/>
<dbReference type="PhylomeDB" id="P9WP29"/>
<dbReference type="Proteomes" id="UP000001584">
    <property type="component" value="Chromosome"/>
</dbReference>
<dbReference type="GO" id="GO:0005576">
    <property type="term" value="C:extracellular region"/>
    <property type="evidence" value="ECO:0007669"/>
    <property type="project" value="UniProtKB-KW"/>
</dbReference>
<dbReference type="GO" id="GO:0005886">
    <property type="term" value="C:plasma membrane"/>
    <property type="evidence" value="ECO:0007005"/>
    <property type="project" value="MTBBASE"/>
</dbReference>
<dbReference type="GO" id="GO:0005524">
    <property type="term" value="F:ATP binding"/>
    <property type="evidence" value="ECO:0007669"/>
    <property type="project" value="UniProtKB-KW"/>
</dbReference>
<dbReference type="GO" id="GO:0004143">
    <property type="term" value="F:ATP-dependent diacylglycerol kinase activity"/>
    <property type="evidence" value="ECO:0000314"/>
    <property type="project" value="MTBBASE"/>
</dbReference>
<dbReference type="GO" id="GO:0046872">
    <property type="term" value="F:metal ion binding"/>
    <property type="evidence" value="ECO:0007669"/>
    <property type="project" value="UniProtKB-KW"/>
</dbReference>
<dbReference type="GO" id="GO:0009247">
    <property type="term" value="P:glycolipid biosynthetic process"/>
    <property type="evidence" value="ECO:0000314"/>
    <property type="project" value="MTBBASE"/>
</dbReference>
<dbReference type="GO" id="GO:0008654">
    <property type="term" value="P:phospholipid biosynthetic process"/>
    <property type="evidence" value="ECO:0007669"/>
    <property type="project" value="UniProtKB-KW"/>
</dbReference>
<dbReference type="Gene3D" id="2.60.200.40">
    <property type="match status" value="1"/>
</dbReference>
<dbReference type="Gene3D" id="3.40.50.10330">
    <property type="entry name" value="Probable inorganic polyphosphate/atp-NAD kinase, domain 1"/>
    <property type="match status" value="1"/>
</dbReference>
<dbReference type="InterPro" id="IPR017438">
    <property type="entry name" value="ATP-NAD_kinase_N"/>
</dbReference>
<dbReference type="InterPro" id="IPR005218">
    <property type="entry name" value="Diacylglycerol/lipid_kinase"/>
</dbReference>
<dbReference type="InterPro" id="IPR001206">
    <property type="entry name" value="Diacylglycerol_kinase_cat_dom"/>
</dbReference>
<dbReference type="InterPro" id="IPR050187">
    <property type="entry name" value="Lipid_Phosphate_FormReg"/>
</dbReference>
<dbReference type="InterPro" id="IPR016064">
    <property type="entry name" value="NAD/diacylglycerol_kinase_sf"/>
</dbReference>
<dbReference type="InterPro" id="IPR045540">
    <property type="entry name" value="YegS/DAGK_C"/>
</dbReference>
<dbReference type="NCBIfam" id="NF008882">
    <property type="entry name" value="PRK11914.1"/>
    <property type="match status" value="1"/>
</dbReference>
<dbReference type="NCBIfam" id="TIGR00147">
    <property type="entry name" value="YegS/Rv2252/BmrU family lipid kinase"/>
    <property type="match status" value="1"/>
</dbReference>
<dbReference type="PANTHER" id="PTHR12358:SF106">
    <property type="entry name" value="LIPID KINASE YEGS"/>
    <property type="match status" value="1"/>
</dbReference>
<dbReference type="PANTHER" id="PTHR12358">
    <property type="entry name" value="SPHINGOSINE KINASE"/>
    <property type="match status" value="1"/>
</dbReference>
<dbReference type="Pfam" id="PF00781">
    <property type="entry name" value="DAGK_cat"/>
    <property type="match status" value="1"/>
</dbReference>
<dbReference type="Pfam" id="PF19279">
    <property type="entry name" value="YegS_C"/>
    <property type="match status" value="1"/>
</dbReference>
<dbReference type="SMART" id="SM00046">
    <property type="entry name" value="DAGKc"/>
    <property type="match status" value="1"/>
</dbReference>
<dbReference type="SUPFAM" id="SSF111331">
    <property type="entry name" value="NAD kinase/diacylglycerol kinase-like"/>
    <property type="match status" value="1"/>
</dbReference>
<dbReference type="PROSITE" id="PS50146">
    <property type="entry name" value="DAGK"/>
    <property type="match status" value="1"/>
</dbReference>